<name>PAGL_BORBR</name>
<comment type="function">
    <text evidence="3">Has lipid A 3-O-deacylase activity. Hydrolyzes the ester bond at the 3 position of lipid A, a bioactive component of lipopolysaccharide (LPS), thereby releasing the primary fatty acyl moiety.</text>
</comment>
<comment type="catalytic activity">
    <reaction evidence="3">
        <text>a 3-(acyloxy)acyl derivative of bacterial toxin + H2O = a 3-hydroxyacyl derivative of bacterial toxin + a fatty acid + H(+)</text>
        <dbReference type="Rhea" id="RHEA:12032"/>
        <dbReference type="ChEBI" id="CHEBI:15377"/>
        <dbReference type="ChEBI" id="CHEBI:15378"/>
        <dbReference type="ChEBI" id="CHEBI:28868"/>
        <dbReference type="ChEBI" id="CHEBI:136853"/>
        <dbReference type="ChEBI" id="CHEBI:140675"/>
        <dbReference type="EC" id="3.1.1.77"/>
    </reaction>
</comment>
<comment type="subunit">
    <text evidence="1">Homodimer.</text>
</comment>
<comment type="subcellular location">
    <subcellularLocation>
        <location evidence="1">Cell outer membrane</location>
        <topology evidence="1">Multi-pass membrane protein</topology>
    </subcellularLocation>
</comment>
<comment type="domain">
    <text evidence="1 5">Consists mainly of an outer membrane-spanning beta-barrel formed by beta-strands both N- and C-terminus residing in the periplasm.</text>
</comment>
<comment type="disruption phenotype">
    <text evidence="3">Increase in relative abundance of 3-OH C10 in lipid A. The most abundant ion detected in lipid A structure contains the addition of a 3-OH C10 acyl chain and a second phosphate group compared to the most abundant ion observed from wild-type lipid A.</text>
</comment>
<comment type="similarity">
    <text evidence="1">Belongs to the PagL family.</text>
</comment>
<proteinExistence type="evidence at protein level"/>
<keyword id="KW-0998">Cell outer membrane</keyword>
<keyword id="KW-0378">Hydrolase</keyword>
<keyword id="KW-0472">Membrane</keyword>
<keyword id="KW-0732">Signal</keyword>
<keyword id="KW-0812">Transmembrane</keyword>
<keyword id="KW-1134">Transmembrane beta strand</keyword>
<sequence length="178" mass="19824">MQFLKKNKPLFGIVTLALACATAQAQPTQGGVSLHYGIGDHYQRVTLNYETPTLWSHQFGGNWGRLDLTPELGASYWWADGSRSPGHVWQASAIPMFRWWTGERFYIEAGIGATVFSSTSFADKRIGSAFQFGDHIGLGFLLTPSNRIGLRYSHFSNAGIKEPNPGLDIVQLTYTYQF</sequence>
<protein>
    <recommendedName>
        <fullName evidence="4">Lipid A deacylase PagL</fullName>
        <ecNumber evidence="3">3.1.1.77</ecNumber>
    </recommendedName>
    <alternativeName>
        <fullName evidence="4">LPS 3-O-deacylase PagL</fullName>
    </alternativeName>
    <alternativeName>
        <fullName evidence="1">Outer membrane enzyme PagL</fullName>
    </alternativeName>
</protein>
<organism>
    <name type="scientific">Bordetella bronchiseptica (strain ATCC BAA-588 / NCTC 13252 / RB50)</name>
    <name type="common">Alcaligenes bronchisepticus</name>
    <dbReference type="NCBI Taxonomy" id="257310"/>
    <lineage>
        <taxon>Bacteria</taxon>
        <taxon>Pseudomonadati</taxon>
        <taxon>Pseudomonadota</taxon>
        <taxon>Betaproteobacteria</taxon>
        <taxon>Burkholderiales</taxon>
        <taxon>Alcaligenaceae</taxon>
        <taxon>Bordetella</taxon>
    </lineage>
</organism>
<gene>
    <name evidence="1" type="primary">pagL</name>
    <name type="ordered locus">BB3771</name>
</gene>
<evidence type="ECO:0000250" key="1">
    <source>
        <dbReference type="UniProtKB" id="Q9HVD1"/>
    </source>
</evidence>
<evidence type="ECO:0000255" key="2"/>
<evidence type="ECO:0000269" key="3">
    <source>
    </source>
</evidence>
<evidence type="ECO:0000303" key="4">
    <source>
    </source>
</evidence>
<evidence type="ECO:0000305" key="5"/>
<evidence type="ECO:0000312" key="6">
    <source>
        <dbReference type="EMBL" id="CAE35745.1"/>
    </source>
</evidence>
<feature type="signal peptide" evidence="2">
    <location>
        <begin position="1"/>
        <end position="19"/>
    </location>
</feature>
<feature type="chain" id="PRO_0000422913" description="Lipid A deacylase PagL" evidence="2">
    <location>
        <begin position="20"/>
        <end position="178"/>
    </location>
</feature>
<feature type="active site" description="Charge relay system" evidence="1">
    <location>
        <position position="154"/>
    </location>
</feature>
<feature type="active site" description="Charge relay system" evidence="1">
    <location>
        <position position="156"/>
    </location>
</feature>
<feature type="active site" description="Charge relay system" evidence="1">
    <location>
        <position position="168"/>
    </location>
</feature>
<feature type="site" description="Critical for activity" evidence="1">
    <location>
        <position position="157"/>
    </location>
</feature>
<dbReference type="EC" id="3.1.1.77" evidence="3"/>
<dbReference type="EMBL" id="BX640448">
    <property type="protein sequence ID" value="CAE35745.1"/>
    <property type="molecule type" value="Genomic_DNA"/>
</dbReference>
<dbReference type="RefSeq" id="WP_003813842.1">
    <property type="nucleotide sequence ID" value="NC_002927.3"/>
</dbReference>
<dbReference type="SMR" id="Q7WD07"/>
<dbReference type="KEGG" id="bbr:BB3771"/>
<dbReference type="eggNOG" id="COG3637">
    <property type="taxonomic scope" value="Bacteria"/>
</dbReference>
<dbReference type="HOGENOM" id="CLU_093405_1_0_4"/>
<dbReference type="Proteomes" id="UP000001027">
    <property type="component" value="Chromosome"/>
</dbReference>
<dbReference type="GO" id="GO:0009279">
    <property type="term" value="C:cell outer membrane"/>
    <property type="evidence" value="ECO:0007669"/>
    <property type="project" value="UniProtKB-SubCell"/>
</dbReference>
<dbReference type="GO" id="GO:0050528">
    <property type="term" value="F:acyloxyacyl hydrolase activity"/>
    <property type="evidence" value="ECO:0000314"/>
    <property type="project" value="UniProtKB"/>
</dbReference>
<dbReference type="GO" id="GO:0042803">
    <property type="term" value="F:protein homodimerization activity"/>
    <property type="evidence" value="ECO:0000250"/>
    <property type="project" value="UniProtKB"/>
</dbReference>
<dbReference type="GO" id="GO:0046493">
    <property type="term" value="P:lipid A metabolic process"/>
    <property type="evidence" value="ECO:0000314"/>
    <property type="project" value="UniProtKB"/>
</dbReference>
<dbReference type="GO" id="GO:0008653">
    <property type="term" value="P:lipopolysaccharide metabolic process"/>
    <property type="evidence" value="ECO:0000314"/>
    <property type="project" value="UniProtKB"/>
</dbReference>
<dbReference type="Gene3D" id="2.40.160.20">
    <property type="match status" value="1"/>
</dbReference>
<dbReference type="InterPro" id="IPR018550">
    <property type="entry name" value="Lipid-A_deacylase-rel"/>
</dbReference>
<dbReference type="InterPro" id="IPR011250">
    <property type="entry name" value="OMP/PagP_b-brl"/>
</dbReference>
<dbReference type="Pfam" id="PF09411">
    <property type="entry name" value="PagL"/>
    <property type="match status" value="1"/>
</dbReference>
<dbReference type="PIRSF" id="PIRSF029681">
    <property type="entry name" value="PagL"/>
    <property type="match status" value="1"/>
</dbReference>
<dbReference type="SUPFAM" id="SSF56925">
    <property type="entry name" value="OMPA-like"/>
    <property type="match status" value="1"/>
</dbReference>
<accession>Q7WD07</accession>
<reference evidence="6" key="1">
    <citation type="journal article" date="2003" name="Nat. Genet.">
        <title>Comparative analysis of the genome sequences of Bordetella pertussis, Bordetella parapertussis and Bordetella bronchiseptica.</title>
        <authorList>
            <person name="Parkhill J."/>
            <person name="Sebaihia M."/>
            <person name="Preston A."/>
            <person name="Murphy L.D."/>
            <person name="Thomson N.R."/>
            <person name="Harris D.E."/>
            <person name="Holden M.T.G."/>
            <person name="Churcher C.M."/>
            <person name="Bentley S.D."/>
            <person name="Mungall K.L."/>
            <person name="Cerdeno-Tarraga A.-M."/>
            <person name="Temple L."/>
            <person name="James K.D."/>
            <person name="Harris B."/>
            <person name="Quail M.A."/>
            <person name="Achtman M."/>
            <person name="Atkin R."/>
            <person name="Baker S."/>
            <person name="Basham D."/>
            <person name="Bason N."/>
            <person name="Cherevach I."/>
            <person name="Chillingworth T."/>
            <person name="Collins M."/>
            <person name="Cronin A."/>
            <person name="Davis P."/>
            <person name="Doggett J."/>
            <person name="Feltwell T."/>
            <person name="Goble A."/>
            <person name="Hamlin N."/>
            <person name="Hauser H."/>
            <person name="Holroyd S."/>
            <person name="Jagels K."/>
            <person name="Leather S."/>
            <person name="Moule S."/>
            <person name="Norberczak H."/>
            <person name="O'Neil S."/>
            <person name="Ormond D."/>
            <person name="Price C."/>
            <person name="Rabbinowitsch E."/>
            <person name="Rutter S."/>
            <person name="Sanders M."/>
            <person name="Saunders D."/>
            <person name="Seeger K."/>
            <person name="Sharp S."/>
            <person name="Simmonds M."/>
            <person name="Skelton J."/>
            <person name="Squares R."/>
            <person name="Squares S."/>
            <person name="Stevens K."/>
            <person name="Unwin L."/>
            <person name="Whitehead S."/>
            <person name="Barrell B.G."/>
            <person name="Maskell D.J."/>
        </authorList>
    </citation>
    <scope>NUCLEOTIDE SEQUENCE [LARGE SCALE GENOMIC DNA]</scope>
    <source>
        <strain>ATCC BAA-588 / NCTC 13252 / RB50</strain>
    </source>
</reference>
<reference evidence="5" key="2">
    <citation type="journal article" date="2011" name="J. Bacteriol.">
        <title>Role of pagL and lpxO in Bordetella bronchiseptica lipid A biosynthesis.</title>
        <authorList>
            <person name="MacArthur I."/>
            <person name="Jones J.W."/>
            <person name="Goodlett D.R."/>
            <person name="Ernst R.K."/>
            <person name="Preston A."/>
        </authorList>
    </citation>
    <scope>FUNCTION</scope>
    <scope>CATALYTIC ACTIVITY</scope>
    <scope>DISRUPTION PHENOTYPE</scope>
    <source>
        <strain evidence="3">ATCC BAA-588 / NCTC 13252 / RB50</strain>
    </source>
</reference>